<proteinExistence type="evidence at protein level"/>
<sequence length="625" mass="71317">MERIACVGRETAPSCSVSSWRRSMKPCSHTGLTKMNLHQDHEFSSQDPLSKCLEAKKELESAISAVLKAEQQVKENGREVKSQVQSYISRHLECLRSREVWLLEQADLIQQLKEETLQQQSQQLYWLLGQFNCLIHQLETPHSTDLVHQISVCLERLGNLALKPEESSTLYFEADVPFLRQAIATFGSIKTLSSSEEKQVLSTAVPCPYVSQNPWLLNNCFVPAAEQRPLSGMWNTPLSDWLQQKKPTSVSQCYTPYIPSLCTQDWLLKNHVAEPNEELSKPNMEEIWGQLGELNNWLLQSQQKENLECKSSSSQFSIEKLEDKDAESQDLEDMDLSDWLISPEVTEDPTNVAVFKAFDEDYKINDWLLKVEACGNCCGRQTSALEIENLGKLKCLNDQIGGKNNVSSSNDIWLLQSSQPVFKPQDVCKANEQCSTFAECVCDESCEKEALRKWLWKREGKDKNGVLQKQRQNLKNREPEKAEPSISMWLHPCRRDAQSSTQKTQECDPSVKHMMDLVETPLSKWMAKSNLTEEKASKETTQSKCSPQAETLSPFHLPLNAANWVLPLKTVDKLEKSEQSAIEDKWLLRKKAHDYYGLPSVCDLFACMKLAADKEKWLYQSPLQM</sequence>
<feature type="chain" id="PRO_0000460478" description="Nuclear receptor coactivator 4-B">
    <location>
        <begin position="1"/>
        <end position="625"/>
    </location>
</feature>
<comment type="function">
    <text evidence="1 2 3">Cargo receptor for the autophagic turnover of ferritin (By similarity). Acts as an adapter for delivery of ferritin to lysosomes and autophagic degradation of ferritin, a process named ferritinophagy (By similarity). Plays a role in erythropoiesis, possibly by regulating hemin-induced erythroid differentiation (By similarity). Binds chromatin before initiation of DNA replication and detaches during replication (PubMed:24910095). Inhibits activation of DNA replication origins, possibly by obstructing DNA unwinding via interaction with the MCM2-7 complex (PubMed:24910095).</text>
</comment>
<comment type="subunit">
    <text evidence="3">Interacts with MCM7.</text>
</comment>
<comment type="subcellular location">
    <subcellularLocation>
        <location evidence="3">Nucleus</location>
    </subcellularLocation>
    <subcellularLocation>
        <location evidence="3">Chromosome</location>
    </subcellularLocation>
    <subcellularLocation>
        <location evidence="1">Cytoplasmic vesicle</location>
        <location evidence="1">Autophagosome</location>
    </subcellularLocation>
    <subcellularLocation>
        <location evidence="1">Autolysosome</location>
    </subcellularLocation>
</comment>
<accession>Q5FWP7</accession>
<name>NCO4B_XENLA</name>
<gene>
    <name evidence="7" type="primary">ncoa4.S</name>
    <name evidence="5" type="synonym">MGC84996</name>
    <name evidence="7" type="synonym">ncoa4</name>
    <name evidence="6" type="synonym">ncoa4-b</name>
</gene>
<organism evidence="5">
    <name type="scientific">Xenopus laevis</name>
    <name type="common">African clawed frog</name>
    <dbReference type="NCBI Taxonomy" id="8355"/>
    <lineage>
        <taxon>Eukaryota</taxon>
        <taxon>Metazoa</taxon>
        <taxon>Chordata</taxon>
        <taxon>Craniata</taxon>
        <taxon>Vertebrata</taxon>
        <taxon>Euteleostomi</taxon>
        <taxon>Amphibia</taxon>
        <taxon>Batrachia</taxon>
        <taxon>Anura</taxon>
        <taxon>Pipoidea</taxon>
        <taxon>Pipidae</taxon>
        <taxon>Xenopodinae</taxon>
        <taxon>Xenopus</taxon>
        <taxon>Xenopus</taxon>
    </lineage>
</organism>
<keyword id="KW-0158">Chromosome</keyword>
<keyword id="KW-0968">Cytoplasmic vesicle</keyword>
<keyword id="KW-0458">Lysosome</keyword>
<keyword id="KW-0539">Nucleus</keyword>
<keyword id="KW-0675">Receptor</keyword>
<keyword id="KW-1185">Reference proteome</keyword>
<evidence type="ECO:0000250" key="1">
    <source>
        <dbReference type="UniProtKB" id="Q13772"/>
    </source>
</evidence>
<evidence type="ECO:0000250" key="2">
    <source>
        <dbReference type="UniProtKB" id="Q802X2"/>
    </source>
</evidence>
<evidence type="ECO:0000269" key="3">
    <source>
    </source>
</evidence>
<evidence type="ECO:0000305" key="4"/>
<evidence type="ECO:0000312" key="5">
    <source>
        <dbReference type="EMBL" id="AAH89257.1"/>
    </source>
</evidence>
<evidence type="ECO:0000312" key="6">
    <source>
        <dbReference type="RefSeq" id="NP_001089238.1"/>
    </source>
</evidence>
<evidence type="ECO:0000312" key="7">
    <source>
        <dbReference type="Xenbase" id="XB-GENE-6251658"/>
    </source>
</evidence>
<dbReference type="EMBL" id="BC089257">
    <property type="protein sequence ID" value="AAH89257.1"/>
    <property type="molecule type" value="mRNA"/>
</dbReference>
<dbReference type="RefSeq" id="NP_001089238.1">
    <property type="nucleotide sequence ID" value="NM_001095769.1"/>
</dbReference>
<dbReference type="SMR" id="Q5FWP7"/>
<dbReference type="GeneID" id="734285"/>
<dbReference type="KEGG" id="xla:734285"/>
<dbReference type="AGR" id="Xenbase:XB-GENE-6251658"/>
<dbReference type="CTD" id="734285"/>
<dbReference type="Xenbase" id="XB-GENE-6251658">
    <property type="gene designation" value="ncoa4.S"/>
</dbReference>
<dbReference type="OrthoDB" id="6334544at2759"/>
<dbReference type="Proteomes" id="UP000186698">
    <property type="component" value="Chromosome 7S"/>
</dbReference>
<dbReference type="Bgee" id="734285">
    <property type="expression patterns" value="Expressed in lung and 19 other cell types or tissues"/>
</dbReference>
<dbReference type="GO" id="GO:0044754">
    <property type="term" value="C:autolysosome"/>
    <property type="evidence" value="ECO:0007669"/>
    <property type="project" value="UniProtKB-SubCell"/>
</dbReference>
<dbReference type="GO" id="GO:0005776">
    <property type="term" value="C:autophagosome"/>
    <property type="evidence" value="ECO:0007669"/>
    <property type="project" value="UniProtKB-SubCell"/>
</dbReference>
<dbReference type="GO" id="GO:0005694">
    <property type="term" value="C:chromosome"/>
    <property type="evidence" value="ECO:0007669"/>
    <property type="project" value="UniProtKB-SubCell"/>
</dbReference>
<dbReference type="GO" id="GO:0031410">
    <property type="term" value="C:cytoplasmic vesicle"/>
    <property type="evidence" value="ECO:0007669"/>
    <property type="project" value="UniProtKB-KW"/>
</dbReference>
<dbReference type="GO" id="GO:0005634">
    <property type="term" value="C:nucleus"/>
    <property type="evidence" value="ECO:0007669"/>
    <property type="project" value="UniProtKB-SubCell"/>
</dbReference>
<dbReference type="GO" id="GO:0003713">
    <property type="term" value="F:transcription coactivator activity"/>
    <property type="evidence" value="ECO:0007669"/>
    <property type="project" value="InterPro"/>
</dbReference>
<dbReference type="GO" id="GO:0006879">
    <property type="term" value="P:intracellular iron ion homeostasis"/>
    <property type="evidence" value="ECO:0007669"/>
    <property type="project" value="InterPro"/>
</dbReference>
<dbReference type="GO" id="GO:0009725">
    <property type="term" value="P:response to hormone"/>
    <property type="evidence" value="ECO:0000318"/>
    <property type="project" value="GO_Central"/>
</dbReference>
<dbReference type="InterPro" id="IPR039947">
    <property type="entry name" value="NCoA-4"/>
</dbReference>
<dbReference type="InterPro" id="IPR022174">
    <property type="entry name" value="NCOA4_N"/>
</dbReference>
<dbReference type="PANTHER" id="PTHR17085">
    <property type="entry name" value="NUCLEAR RECEPTOR COACTIVATOR 4"/>
    <property type="match status" value="1"/>
</dbReference>
<dbReference type="PANTHER" id="PTHR17085:SF3">
    <property type="entry name" value="NUCLEAR RECEPTOR COACTIVATOR 4"/>
    <property type="match status" value="1"/>
</dbReference>
<dbReference type="Pfam" id="PF12489">
    <property type="entry name" value="ARA70"/>
    <property type="match status" value="2"/>
</dbReference>
<reference evidence="5" key="1">
    <citation type="submission" date="2002-12" db="EMBL/GenBank/DDBJ databases">
        <authorList>
            <consortium name="NIH - Xenopus Gene Collection (XGC) project"/>
        </authorList>
    </citation>
    <scope>NUCLEOTIDE SEQUENCE [LARGE SCALE MRNA]</scope>
</reference>
<reference evidence="4" key="2">
    <citation type="journal article" date="2014" name="Mol. Cell">
        <title>NCOA4 transcriptional coactivator inhibits activation of DNA replication origins.</title>
        <authorList>
            <person name="Bellelli R."/>
            <person name="Castellone M.D."/>
            <person name="Guida T."/>
            <person name="Limongello R."/>
            <person name="Dathan N.A."/>
            <person name="Merolla F."/>
            <person name="Cirafici A.M."/>
            <person name="Affuso A."/>
            <person name="Masai H."/>
            <person name="Costanzo V."/>
            <person name="Grieco D."/>
            <person name="Fusco A."/>
            <person name="Santoro M."/>
            <person name="Carlomagno F."/>
        </authorList>
    </citation>
    <scope>FUNCTION</scope>
    <scope>SUBCELLULAR LOCATION</scope>
    <scope>INTERACTION WITH MCM7</scope>
</reference>
<protein>
    <recommendedName>
        <fullName evidence="4">Nuclear receptor coactivator 4-B</fullName>
        <shortName evidence="4">NCoA-4-B</shortName>
    </recommendedName>
    <alternativeName>
        <fullName evidence="4">Ferritin cargo receptor NCOA4-S</fullName>
    </alternativeName>
</protein>